<gene>
    <name evidence="1" type="primary">hisA</name>
    <name type="ordered locus">Adeh_0715</name>
</gene>
<reference key="1">
    <citation type="submission" date="2006-01" db="EMBL/GenBank/DDBJ databases">
        <title>Complete sequence of Anaeromyxobacter dehalogenans 2CP-C.</title>
        <authorList>
            <person name="Copeland A."/>
            <person name="Lucas S."/>
            <person name="Lapidus A."/>
            <person name="Barry K."/>
            <person name="Detter J.C."/>
            <person name="Glavina T."/>
            <person name="Hammon N."/>
            <person name="Israni S."/>
            <person name="Pitluck S."/>
            <person name="Brettin T."/>
            <person name="Bruce D."/>
            <person name="Han C."/>
            <person name="Tapia R."/>
            <person name="Gilna P."/>
            <person name="Kiss H."/>
            <person name="Schmutz J."/>
            <person name="Larimer F."/>
            <person name="Land M."/>
            <person name="Kyrpides N."/>
            <person name="Anderson I."/>
            <person name="Sanford R.A."/>
            <person name="Ritalahti K.M."/>
            <person name="Thomas H.S."/>
            <person name="Kirby J.R."/>
            <person name="Zhulin I.B."/>
            <person name="Loeffler F.E."/>
            <person name="Richardson P."/>
        </authorList>
    </citation>
    <scope>NUCLEOTIDE SEQUENCE [LARGE SCALE GENOMIC DNA]</scope>
    <source>
        <strain>2CP-C</strain>
    </source>
</reference>
<proteinExistence type="inferred from homology"/>
<protein>
    <recommendedName>
        <fullName evidence="1">1-(5-phosphoribosyl)-5-[(5-phosphoribosylamino)methylideneamino] imidazole-4-carboxamide isomerase</fullName>
        <ecNumber evidence="1">5.3.1.16</ecNumber>
    </recommendedName>
    <alternativeName>
        <fullName evidence="1">Phosphoribosylformimino-5-aminoimidazole carboxamide ribotide isomerase</fullName>
    </alternativeName>
</protein>
<evidence type="ECO:0000255" key="1">
    <source>
        <dbReference type="HAMAP-Rule" id="MF_01014"/>
    </source>
</evidence>
<feature type="chain" id="PRO_0000290446" description="1-(5-phosphoribosyl)-5-[(5-phosphoribosylamino)methylideneamino] imidazole-4-carboxamide isomerase">
    <location>
        <begin position="1"/>
        <end position="238"/>
    </location>
</feature>
<feature type="active site" description="Proton acceptor" evidence="1">
    <location>
        <position position="8"/>
    </location>
</feature>
<feature type="active site" description="Proton donor" evidence="1">
    <location>
        <position position="129"/>
    </location>
</feature>
<sequence>MLVIPAIDLIGGEVVRLEKGDFAKKTVYARDPAEKAAELVRDGATLIHVVDLDGAKAGWPVNLDAVRAICAVPGAEVELGGGLRSLPDIEKVLELGVRYVVLGTAAVERLDLVRQACARFPGRVRSGIDARNGEVKIAGWLEGTGLGAAEVARRVKEAGVGLVEYTDVGRDGMFTGVDADGAARLQAEAGVQVVASGGVASLDDVRACRAAGLAGVIVGKALYEGRIALADAVRTAAE</sequence>
<organism>
    <name type="scientific">Anaeromyxobacter dehalogenans (strain 2CP-C)</name>
    <dbReference type="NCBI Taxonomy" id="290397"/>
    <lineage>
        <taxon>Bacteria</taxon>
        <taxon>Pseudomonadati</taxon>
        <taxon>Myxococcota</taxon>
        <taxon>Myxococcia</taxon>
        <taxon>Myxococcales</taxon>
        <taxon>Cystobacterineae</taxon>
        <taxon>Anaeromyxobacteraceae</taxon>
        <taxon>Anaeromyxobacter</taxon>
    </lineage>
</organism>
<dbReference type="EC" id="5.3.1.16" evidence="1"/>
<dbReference type="EMBL" id="CP000251">
    <property type="protein sequence ID" value="ABC80491.1"/>
    <property type="molecule type" value="Genomic_DNA"/>
</dbReference>
<dbReference type="RefSeq" id="WP_011419774.1">
    <property type="nucleotide sequence ID" value="NC_007760.1"/>
</dbReference>
<dbReference type="SMR" id="Q2INW2"/>
<dbReference type="STRING" id="290397.Adeh_0715"/>
<dbReference type="KEGG" id="ade:Adeh_0715"/>
<dbReference type="eggNOG" id="COG0106">
    <property type="taxonomic scope" value="Bacteria"/>
</dbReference>
<dbReference type="HOGENOM" id="CLU_048577_1_1_7"/>
<dbReference type="OrthoDB" id="9807749at2"/>
<dbReference type="UniPathway" id="UPA00031">
    <property type="reaction ID" value="UER00009"/>
</dbReference>
<dbReference type="Proteomes" id="UP000001935">
    <property type="component" value="Chromosome"/>
</dbReference>
<dbReference type="GO" id="GO:0005737">
    <property type="term" value="C:cytoplasm"/>
    <property type="evidence" value="ECO:0007669"/>
    <property type="project" value="UniProtKB-SubCell"/>
</dbReference>
<dbReference type="GO" id="GO:0003949">
    <property type="term" value="F:1-(5-phosphoribosyl)-5-[(5-phosphoribosylamino)methylideneamino]imidazole-4-carboxamide isomerase activity"/>
    <property type="evidence" value="ECO:0007669"/>
    <property type="project" value="UniProtKB-UniRule"/>
</dbReference>
<dbReference type="GO" id="GO:0000105">
    <property type="term" value="P:L-histidine biosynthetic process"/>
    <property type="evidence" value="ECO:0007669"/>
    <property type="project" value="UniProtKB-UniRule"/>
</dbReference>
<dbReference type="GO" id="GO:0000162">
    <property type="term" value="P:L-tryptophan biosynthetic process"/>
    <property type="evidence" value="ECO:0007669"/>
    <property type="project" value="TreeGrafter"/>
</dbReference>
<dbReference type="CDD" id="cd04732">
    <property type="entry name" value="HisA"/>
    <property type="match status" value="1"/>
</dbReference>
<dbReference type="FunFam" id="3.20.20.70:FF:000009">
    <property type="entry name" value="1-(5-phosphoribosyl)-5-[(5-phosphoribosylamino)methylideneamino] imidazole-4-carboxamide isomerase"/>
    <property type="match status" value="1"/>
</dbReference>
<dbReference type="Gene3D" id="3.20.20.70">
    <property type="entry name" value="Aldolase class I"/>
    <property type="match status" value="1"/>
</dbReference>
<dbReference type="HAMAP" id="MF_01014">
    <property type="entry name" value="HisA"/>
    <property type="match status" value="1"/>
</dbReference>
<dbReference type="InterPro" id="IPR013785">
    <property type="entry name" value="Aldolase_TIM"/>
</dbReference>
<dbReference type="InterPro" id="IPR006062">
    <property type="entry name" value="His_biosynth"/>
</dbReference>
<dbReference type="InterPro" id="IPR006063">
    <property type="entry name" value="HisA_bact_arch"/>
</dbReference>
<dbReference type="InterPro" id="IPR044524">
    <property type="entry name" value="Isoase_HisA-like"/>
</dbReference>
<dbReference type="InterPro" id="IPR023016">
    <property type="entry name" value="Isoase_HisA-like_bact"/>
</dbReference>
<dbReference type="InterPro" id="IPR011060">
    <property type="entry name" value="RibuloseP-bd_barrel"/>
</dbReference>
<dbReference type="NCBIfam" id="TIGR00007">
    <property type="entry name" value="1-(5-phosphoribosyl)-5-[(5-phosphoribosylamino)methylideneamino]imidazole-4-carboxamide isomerase"/>
    <property type="match status" value="1"/>
</dbReference>
<dbReference type="PANTHER" id="PTHR43090">
    <property type="entry name" value="1-(5-PHOSPHORIBOSYL)-5-[(5-PHOSPHORIBOSYLAMINO)METHYLIDENEAMINO] IMIDAZOLE-4-CARBOXAMIDE ISOMERASE"/>
    <property type="match status" value="1"/>
</dbReference>
<dbReference type="PANTHER" id="PTHR43090:SF2">
    <property type="entry name" value="1-(5-PHOSPHORIBOSYL)-5-[(5-PHOSPHORIBOSYLAMINO)METHYLIDENEAMINO] IMIDAZOLE-4-CARBOXAMIDE ISOMERASE"/>
    <property type="match status" value="1"/>
</dbReference>
<dbReference type="Pfam" id="PF00977">
    <property type="entry name" value="His_biosynth"/>
    <property type="match status" value="1"/>
</dbReference>
<dbReference type="SUPFAM" id="SSF51366">
    <property type="entry name" value="Ribulose-phoshate binding barrel"/>
    <property type="match status" value="1"/>
</dbReference>
<comment type="catalytic activity">
    <reaction evidence="1">
        <text>1-(5-phospho-beta-D-ribosyl)-5-[(5-phospho-beta-D-ribosylamino)methylideneamino]imidazole-4-carboxamide = 5-[(5-phospho-1-deoxy-D-ribulos-1-ylimino)methylamino]-1-(5-phospho-beta-D-ribosyl)imidazole-4-carboxamide</text>
        <dbReference type="Rhea" id="RHEA:15469"/>
        <dbReference type="ChEBI" id="CHEBI:58435"/>
        <dbReference type="ChEBI" id="CHEBI:58525"/>
        <dbReference type="EC" id="5.3.1.16"/>
    </reaction>
</comment>
<comment type="pathway">
    <text evidence="1">Amino-acid biosynthesis; L-histidine biosynthesis; L-histidine from 5-phospho-alpha-D-ribose 1-diphosphate: step 4/9.</text>
</comment>
<comment type="subcellular location">
    <subcellularLocation>
        <location evidence="1">Cytoplasm</location>
    </subcellularLocation>
</comment>
<comment type="similarity">
    <text evidence="1">Belongs to the HisA/HisF family.</text>
</comment>
<keyword id="KW-0028">Amino-acid biosynthesis</keyword>
<keyword id="KW-0963">Cytoplasm</keyword>
<keyword id="KW-0368">Histidine biosynthesis</keyword>
<keyword id="KW-0413">Isomerase</keyword>
<keyword id="KW-1185">Reference proteome</keyword>
<name>HIS4_ANADE</name>
<accession>Q2INW2</accession>